<protein>
    <recommendedName>
        <fullName>Interleukin-1 family member 10</fullName>
        <shortName>IL-1F10</shortName>
    </recommendedName>
    <alternativeName>
        <fullName>Family of interleukin 1-theta</fullName>
        <shortName>FIL1 theta</shortName>
    </alternativeName>
    <alternativeName>
        <fullName>Interleukin-1 HY2</fullName>
        <shortName>IL-1HY2</shortName>
    </alternativeName>
    <alternativeName>
        <fullName>Interleukin-1 theta</fullName>
        <shortName>IL-1 theta</shortName>
    </alternativeName>
    <alternativeName>
        <fullName>Interleukin-38</fullName>
        <shortName>IL-38</shortName>
    </alternativeName>
</protein>
<feature type="chain" id="PRO_0000153650" description="Interleukin-1 family member 10">
    <location>
        <begin position="1"/>
        <end position="152"/>
    </location>
</feature>
<feature type="splice variant" id="VSP_002658" description="In isoform 2." evidence="7">
    <original>YYIIKYADQKALYTRDGQLLVGDPVADNCCA</original>
    <variation>MSSSFLPEPLPAKSLQHGVPLSLDSSLSSLL</variation>
    <location>
        <begin position="9"/>
        <end position="39"/>
    </location>
</feature>
<feature type="sequence variant" id="VAR_014262" description="In dbSNP:rs6761276." evidence="1 2 3 6">
    <original>I</original>
    <variation>T</variation>
    <location>
        <position position="44"/>
    </location>
</feature>
<feature type="sequence variant" id="VAR_014263" description="In dbSNP:rs6743376." evidence="1 2 3 6">
    <original>A</original>
    <variation>D</variation>
    <location>
        <position position="51"/>
    </location>
</feature>
<feature type="strand" evidence="10">
    <location>
        <begin position="8"/>
        <end position="13"/>
    </location>
</feature>
<feature type="helix" evidence="10">
    <location>
        <begin position="15"/>
        <end position="17"/>
    </location>
</feature>
<feature type="strand" evidence="10">
    <location>
        <begin position="19"/>
        <end position="23"/>
    </location>
</feature>
<feature type="strand" evidence="10">
    <location>
        <begin position="26"/>
        <end position="30"/>
    </location>
</feature>
<feature type="helix" evidence="10">
    <location>
        <begin position="33"/>
        <end position="35"/>
    </location>
</feature>
<feature type="strand" evidence="10">
    <location>
        <begin position="42"/>
        <end position="46"/>
    </location>
</feature>
<feature type="strand" evidence="10">
    <location>
        <begin position="56"/>
        <end position="61"/>
    </location>
</feature>
<feature type="turn" evidence="10">
    <location>
        <begin position="62"/>
        <end position="65"/>
    </location>
</feature>
<feature type="strand" evidence="10">
    <location>
        <begin position="66"/>
        <end position="71"/>
    </location>
</feature>
<feature type="strand" evidence="10">
    <location>
        <begin position="78"/>
        <end position="83"/>
    </location>
</feature>
<feature type="helix" evidence="10">
    <location>
        <begin position="86"/>
        <end position="90"/>
    </location>
</feature>
<feature type="helix" evidence="10">
    <location>
        <begin position="94"/>
        <end position="99"/>
    </location>
</feature>
<feature type="strand" evidence="10">
    <location>
        <begin position="101"/>
        <end position="106"/>
    </location>
</feature>
<feature type="strand" evidence="10">
    <location>
        <begin position="109"/>
        <end position="114"/>
    </location>
</feature>
<feature type="strand" evidence="10">
    <location>
        <begin position="120"/>
        <end position="123"/>
    </location>
</feature>
<feature type="strand" evidence="10">
    <location>
        <begin position="133"/>
        <end position="136"/>
    </location>
</feature>
<feature type="helix" evidence="10">
    <location>
        <begin position="142"/>
        <end position="144"/>
    </location>
</feature>
<feature type="strand" evidence="10">
    <location>
        <begin position="146"/>
        <end position="150"/>
    </location>
</feature>
<reference key="1">
    <citation type="journal article" date="2001" name="J. Interferon Cytokine Res.">
        <title>Identification of a novel human cytokine gene in the interleukin gene cluster on chromosome 2q12-14.</title>
        <authorList>
            <person name="Bensen J.T."/>
            <person name="Dawson P.A."/>
            <person name="Mychaleckyj J.C."/>
            <person name="Bowden D.W."/>
        </authorList>
    </citation>
    <scope>NUCLEOTIDE SEQUENCE [MRNA] (ISOFORM 1)</scope>
    <source>
        <tissue>Thymus</tissue>
    </source>
</reference>
<reference key="2">
    <citation type="submission" date="2001-02" db="EMBL/GenBank/DDBJ databases">
        <title>Identification and characterization of FKSG75, a novel member of the interleukin-1 family.</title>
        <authorList>
            <person name="Wang Y.-G."/>
            <person name="Li T."/>
            <person name="Gong L."/>
        </authorList>
    </citation>
    <scope>NUCLEOTIDE SEQUENCE [MRNA] (ISOFORM 2)</scope>
</reference>
<reference key="3">
    <citation type="journal article" date="2001" name="J. Biol. Chem.">
        <title>Cloning and characterization of IL1HY2, a novel interleukin-1 family member.</title>
        <authorList>
            <person name="Lin H."/>
            <person name="Ho A.S."/>
            <person name="Haley-Vicente D."/>
            <person name="Zhang J."/>
            <person name="Bernal-Fussell J."/>
            <person name="Pace A.M."/>
            <person name="Hansen D."/>
            <person name="Schweighofer K."/>
            <person name="Mize N.K."/>
            <person name="Ford J.E."/>
        </authorList>
    </citation>
    <scope>NUCLEOTIDE SEQUENCE [GENOMIC DNA / MRNA] (ISOFORM 1)</scope>
    <scope>VARIANTS THR-44 AND ASP-51</scope>
    <source>
        <tissue>Fetal skin</tissue>
    </source>
</reference>
<reference key="4">
    <citation type="journal article" date="2002" name="Genomics">
        <title>A sequence-based map of the nine genes of the human interleukin-1 cluster.</title>
        <authorList>
            <person name="Nicklin M.J.H."/>
            <person name="Barton J.L."/>
            <person name="Nguyen M."/>
            <person name="Fitzgerald M.G."/>
            <person name="Duff W.G."/>
            <person name="Kornman K."/>
        </authorList>
    </citation>
    <scope>NUCLEOTIDE SEQUENCE [GENOMIC DNA]</scope>
</reference>
<reference key="5">
    <citation type="journal article" date="2003" name="Genome Res.">
        <title>The secreted protein discovery initiative (SPDI), a large-scale effort to identify novel human secreted and transmembrane proteins: a bioinformatics assessment.</title>
        <authorList>
            <person name="Clark H.F."/>
            <person name="Gurney A.L."/>
            <person name="Abaya E."/>
            <person name="Baker K."/>
            <person name="Baldwin D.T."/>
            <person name="Brush J."/>
            <person name="Chen J."/>
            <person name="Chow B."/>
            <person name="Chui C."/>
            <person name="Crowley C."/>
            <person name="Currell B."/>
            <person name="Deuel B."/>
            <person name="Dowd P."/>
            <person name="Eaton D."/>
            <person name="Foster J.S."/>
            <person name="Grimaldi C."/>
            <person name="Gu Q."/>
            <person name="Hass P.E."/>
            <person name="Heldens S."/>
            <person name="Huang A."/>
            <person name="Kim H.S."/>
            <person name="Klimowski L."/>
            <person name="Jin Y."/>
            <person name="Johnson S."/>
            <person name="Lee J."/>
            <person name="Lewis L."/>
            <person name="Liao D."/>
            <person name="Mark M.R."/>
            <person name="Robbie E."/>
            <person name="Sanchez C."/>
            <person name="Schoenfeld J."/>
            <person name="Seshagiri S."/>
            <person name="Simmons L."/>
            <person name="Singh J."/>
            <person name="Smith V."/>
            <person name="Stinson J."/>
            <person name="Vagts A."/>
            <person name="Vandlen R.L."/>
            <person name="Watanabe C."/>
            <person name="Wieand D."/>
            <person name="Woods K."/>
            <person name="Xie M.-H."/>
            <person name="Yansura D.G."/>
            <person name="Yi S."/>
            <person name="Yu G."/>
            <person name="Yuan J."/>
            <person name="Zhang M."/>
            <person name="Zhang Z."/>
            <person name="Goddard A.D."/>
            <person name="Wood W.I."/>
            <person name="Godowski P.J."/>
            <person name="Gray A.M."/>
        </authorList>
    </citation>
    <scope>NUCLEOTIDE SEQUENCE [LARGE SCALE MRNA] (ISOFORM 1)</scope>
</reference>
<reference key="6">
    <citation type="submission" date="2005-03" db="EMBL/GenBank/DDBJ databases">
        <authorList>
            <consortium name="SeattleSNPs variation discovery resource"/>
        </authorList>
    </citation>
    <scope>NUCLEOTIDE SEQUENCE [GENOMIC DNA]</scope>
    <scope>VARIANTS THR-44 AND ASP-51</scope>
</reference>
<reference key="7">
    <citation type="journal article" date="2005" name="Nature">
        <title>Generation and annotation of the DNA sequences of human chromosomes 2 and 4.</title>
        <authorList>
            <person name="Hillier L.W."/>
            <person name="Graves T.A."/>
            <person name="Fulton R.S."/>
            <person name="Fulton L.A."/>
            <person name="Pepin K.H."/>
            <person name="Minx P."/>
            <person name="Wagner-McPherson C."/>
            <person name="Layman D."/>
            <person name="Wylie K."/>
            <person name="Sekhon M."/>
            <person name="Becker M.C."/>
            <person name="Fewell G.A."/>
            <person name="Delehaunty K.D."/>
            <person name="Miner T.L."/>
            <person name="Nash W.E."/>
            <person name="Kremitzki C."/>
            <person name="Oddy L."/>
            <person name="Du H."/>
            <person name="Sun H."/>
            <person name="Bradshaw-Cordum H."/>
            <person name="Ali J."/>
            <person name="Carter J."/>
            <person name="Cordes M."/>
            <person name="Harris A."/>
            <person name="Isak A."/>
            <person name="van Brunt A."/>
            <person name="Nguyen C."/>
            <person name="Du F."/>
            <person name="Courtney L."/>
            <person name="Kalicki J."/>
            <person name="Ozersky P."/>
            <person name="Abbott S."/>
            <person name="Armstrong J."/>
            <person name="Belter E.A."/>
            <person name="Caruso L."/>
            <person name="Cedroni M."/>
            <person name="Cotton M."/>
            <person name="Davidson T."/>
            <person name="Desai A."/>
            <person name="Elliott G."/>
            <person name="Erb T."/>
            <person name="Fronick C."/>
            <person name="Gaige T."/>
            <person name="Haakenson W."/>
            <person name="Haglund K."/>
            <person name="Holmes A."/>
            <person name="Harkins R."/>
            <person name="Kim K."/>
            <person name="Kruchowski S.S."/>
            <person name="Strong C.M."/>
            <person name="Grewal N."/>
            <person name="Goyea E."/>
            <person name="Hou S."/>
            <person name="Levy A."/>
            <person name="Martinka S."/>
            <person name="Mead K."/>
            <person name="McLellan M.D."/>
            <person name="Meyer R."/>
            <person name="Randall-Maher J."/>
            <person name="Tomlinson C."/>
            <person name="Dauphin-Kohlberg S."/>
            <person name="Kozlowicz-Reilly A."/>
            <person name="Shah N."/>
            <person name="Swearengen-Shahid S."/>
            <person name="Snider J."/>
            <person name="Strong J.T."/>
            <person name="Thompson J."/>
            <person name="Yoakum M."/>
            <person name="Leonard S."/>
            <person name="Pearman C."/>
            <person name="Trani L."/>
            <person name="Radionenko M."/>
            <person name="Waligorski J.E."/>
            <person name="Wang C."/>
            <person name="Rock S.M."/>
            <person name="Tin-Wollam A.-M."/>
            <person name="Maupin R."/>
            <person name="Latreille P."/>
            <person name="Wendl M.C."/>
            <person name="Yang S.-P."/>
            <person name="Pohl C."/>
            <person name="Wallis J.W."/>
            <person name="Spieth J."/>
            <person name="Bieri T.A."/>
            <person name="Berkowicz N."/>
            <person name="Nelson J.O."/>
            <person name="Osborne J."/>
            <person name="Ding L."/>
            <person name="Meyer R."/>
            <person name="Sabo A."/>
            <person name="Shotland Y."/>
            <person name="Sinha P."/>
            <person name="Wohldmann P.E."/>
            <person name="Cook L.L."/>
            <person name="Hickenbotham M.T."/>
            <person name="Eldred J."/>
            <person name="Williams D."/>
            <person name="Jones T.A."/>
            <person name="She X."/>
            <person name="Ciccarelli F.D."/>
            <person name="Izaurralde E."/>
            <person name="Taylor J."/>
            <person name="Schmutz J."/>
            <person name="Myers R.M."/>
            <person name="Cox D.R."/>
            <person name="Huang X."/>
            <person name="McPherson J.D."/>
            <person name="Mardis E.R."/>
            <person name="Clifton S.W."/>
            <person name="Warren W.C."/>
            <person name="Chinwalla A.T."/>
            <person name="Eddy S.R."/>
            <person name="Marra M.A."/>
            <person name="Ovcharenko I."/>
            <person name="Furey T.S."/>
            <person name="Miller W."/>
            <person name="Eichler E.E."/>
            <person name="Bork P."/>
            <person name="Suyama M."/>
            <person name="Torrents D."/>
            <person name="Waterston R.H."/>
            <person name="Wilson R.K."/>
        </authorList>
    </citation>
    <scope>NUCLEOTIDE SEQUENCE [LARGE SCALE GENOMIC DNA]</scope>
</reference>
<reference key="8">
    <citation type="journal article" date="2004" name="Genome Res.">
        <title>The status, quality, and expansion of the NIH full-length cDNA project: the Mammalian Gene Collection (MGC).</title>
        <authorList>
            <consortium name="The MGC Project Team"/>
        </authorList>
    </citation>
    <scope>NUCLEOTIDE SEQUENCE [LARGE SCALE MRNA]</scope>
    <scope>VARIANTS THR-44 AND ASP-51</scope>
</reference>
<reference key="9">
    <citation type="journal article" date="2012" name="Proc. Natl. Acad. Sci. U.S.A.">
        <title>IL-38 binds to the IL-36 receptor and has biological effects on immune cells similar to IL-36 receptor antagonist.</title>
        <authorList>
            <person name="van de Veerdonk F.L."/>
            <person name="Stoeckman A.K."/>
            <person name="Wu G."/>
            <person name="Boeckermann A.N."/>
            <person name="Azam T."/>
            <person name="Netea M.G."/>
            <person name="Joosten L.A."/>
            <person name="van der Meer J.W."/>
            <person name="Hao R."/>
            <person name="Kalabokis V."/>
            <person name="Dinarello C.A."/>
        </authorList>
    </citation>
    <scope>FUNCTION</scope>
</reference>
<reference key="10">
    <citation type="journal article" date="2020" name="Cell">
        <title>A Translocation Pathway for Vesicle-Mediated Unconventional Protein Secretion.</title>
        <authorList>
            <person name="Zhang M."/>
            <person name="Liu L."/>
            <person name="Lin X."/>
            <person name="Wang Y."/>
            <person name="Li Y."/>
            <person name="Guo Q."/>
            <person name="Li S."/>
            <person name="Sun Y."/>
            <person name="Tao X."/>
            <person name="Zhang D."/>
            <person name="Lv X."/>
            <person name="Zheng L."/>
            <person name="Ge L."/>
        </authorList>
    </citation>
    <scope>SUBCELLULAR LOCATION</scope>
    <scope>INTERACTION WITH TMED10</scope>
</reference>
<reference key="11">
    <citation type="journal article" date="2002" name="Genomics">
        <title>Genomic organization of the interleukin-1 locus.</title>
        <authorList>
            <person name="Taylor S.L."/>
            <person name="Renshaw B.R."/>
            <person name="Garka K.E."/>
            <person name="Smith D.E."/>
            <person name="Sims J.E."/>
        </authorList>
    </citation>
    <scope>VARIANTS THR-44 AND ASP-51</scope>
</reference>
<sequence length="152" mass="16943">MCSLPMARYYIIKYADQKALYTRDGQLLVGDPVADNCCAEKICILPNRGLARTKVPIFLGIQGGSRCLACVETEEGPSLQLEDVNIEELYKGGEEATRFTFFQSSSGSAFRLEAAAWPGWFLCGPAEPQQPVQLTKESEPSARTKFYFEQSW</sequence>
<name>IL1FA_HUMAN</name>
<accession>Q8WWZ1</accession>
<accession>Q53SR9</accession>
<accession>Q56AT8</accession>
<accession>Q7RTZ5</accession>
<accession>Q969H5</accession>
<accession>Q9BYX1</accession>
<organism>
    <name type="scientific">Homo sapiens</name>
    <name type="common">Human</name>
    <dbReference type="NCBI Taxonomy" id="9606"/>
    <lineage>
        <taxon>Eukaryota</taxon>
        <taxon>Metazoa</taxon>
        <taxon>Chordata</taxon>
        <taxon>Craniata</taxon>
        <taxon>Vertebrata</taxon>
        <taxon>Euteleostomi</taxon>
        <taxon>Mammalia</taxon>
        <taxon>Eutheria</taxon>
        <taxon>Euarchontoglires</taxon>
        <taxon>Primates</taxon>
        <taxon>Haplorrhini</taxon>
        <taxon>Catarrhini</taxon>
        <taxon>Hominidae</taxon>
        <taxon>Homo</taxon>
    </lineage>
</organism>
<proteinExistence type="evidence at protein level"/>
<evidence type="ECO:0000269" key="1">
    <source>
    </source>
</evidence>
<evidence type="ECO:0000269" key="2">
    <source>
    </source>
</evidence>
<evidence type="ECO:0000269" key="3">
    <source>
    </source>
</evidence>
<evidence type="ECO:0000269" key="4">
    <source>
    </source>
</evidence>
<evidence type="ECO:0000269" key="5">
    <source>
    </source>
</evidence>
<evidence type="ECO:0000269" key="6">
    <source ref="6"/>
</evidence>
<evidence type="ECO:0000303" key="7">
    <source ref="2"/>
</evidence>
<evidence type="ECO:0000305" key="8"/>
<evidence type="ECO:0000312" key="9">
    <source>
        <dbReference type="MIM" id="615296"/>
    </source>
</evidence>
<evidence type="ECO:0007829" key="10">
    <source>
        <dbReference type="PDB" id="5BOW"/>
    </source>
</evidence>
<keyword id="KW-0002">3D-structure</keyword>
<keyword id="KW-0025">Alternative splicing</keyword>
<keyword id="KW-0202">Cytokine</keyword>
<keyword id="KW-0963">Cytoplasm</keyword>
<keyword id="KW-1267">Proteomics identification</keyword>
<keyword id="KW-1185">Reference proteome</keyword>
<keyword id="KW-0964">Secreted</keyword>
<dbReference type="EMBL" id="AY029413">
    <property type="protein sequence ID" value="AAK33010.1"/>
    <property type="molecule type" value="mRNA"/>
</dbReference>
<dbReference type="EMBL" id="AY026753">
    <property type="protein sequence ID" value="AAK01948.1"/>
    <property type="molecule type" value="mRNA"/>
</dbReference>
<dbReference type="EMBL" id="AF334755">
    <property type="protein sequence ID" value="AAK68048.1"/>
    <property type="molecule type" value="mRNA"/>
</dbReference>
<dbReference type="EMBL" id="AF334756">
    <property type="protein sequence ID" value="AAK68049.1"/>
    <property type="molecule type" value="Genomic_DNA"/>
</dbReference>
<dbReference type="EMBL" id="BN000002">
    <property type="protein sequence ID" value="CAD29878.1"/>
    <property type="molecule type" value="Genomic_DNA"/>
</dbReference>
<dbReference type="EMBL" id="AY358846">
    <property type="protein sequence ID" value="AAQ89205.1"/>
    <property type="molecule type" value="mRNA"/>
</dbReference>
<dbReference type="EMBL" id="AY972854">
    <property type="protein sequence ID" value="AAX59032.1"/>
    <property type="molecule type" value="Genomic_DNA"/>
</dbReference>
<dbReference type="EMBL" id="AC016724">
    <property type="protein sequence ID" value="AAY14991.1"/>
    <property type="molecule type" value="Genomic_DNA"/>
</dbReference>
<dbReference type="EMBL" id="BC103966">
    <property type="protein sequence ID" value="AAI03967.1"/>
    <property type="molecule type" value="mRNA"/>
</dbReference>
<dbReference type="EMBL" id="BC103967">
    <property type="protein sequence ID" value="AAI03968.1"/>
    <property type="molecule type" value="mRNA"/>
</dbReference>
<dbReference type="EMBL" id="BC103968">
    <property type="protein sequence ID" value="AAI03969.1"/>
    <property type="molecule type" value="mRNA"/>
</dbReference>
<dbReference type="CCDS" id="CCDS2112.1">
    <molecule id="Q8WWZ1-1"/>
</dbReference>
<dbReference type="RefSeq" id="NP_115945.4">
    <molecule id="Q8WWZ1-1"/>
    <property type="nucleotide sequence ID" value="NM_032556.5"/>
</dbReference>
<dbReference type="RefSeq" id="NP_775184.1">
    <molecule id="Q8WWZ1-1"/>
    <property type="nucleotide sequence ID" value="NM_173161.3"/>
</dbReference>
<dbReference type="PDB" id="5BOW">
    <property type="method" value="X-ray"/>
    <property type="resolution" value="1.31 A"/>
    <property type="chains" value="A=3-152"/>
</dbReference>
<dbReference type="PDBsum" id="5BOW"/>
<dbReference type="SMR" id="Q8WWZ1"/>
<dbReference type="BioGRID" id="124164">
    <property type="interactions" value="29"/>
</dbReference>
<dbReference type="FunCoup" id="Q8WWZ1">
    <property type="interactions" value="419"/>
</dbReference>
<dbReference type="IntAct" id="Q8WWZ1">
    <property type="interactions" value="8"/>
</dbReference>
<dbReference type="STRING" id="9606.ENSP00000376893"/>
<dbReference type="iPTMnet" id="Q8WWZ1"/>
<dbReference type="PhosphoSitePlus" id="Q8WWZ1"/>
<dbReference type="BioMuta" id="IL1F10"/>
<dbReference type="DMDM" id="25008589"/>
<dbReference type="MassIVE" id="Q8WWZ1"/>
<dbReference type="PaxDb" id="9606-ENSP00000376893"/>
<dbReference type="PeptideAtlas" id="Q8WWZ1"/>
<dbReference type="ProteomicsDB" id="74961">
    <molecule id="Q8WWZ1-1"/>
</dbReference>
<dbReference type="ProteomicsDB" id="74962">
    <molecule id="Q8WWZ1-2"/>
</dbReference>
<dbReference type="Antibodypedia" id="47548">
    <property type="antibodies" value="183 antibodies from 26 providers"/>
</dbReference>
<dbReference type="DNASU" id="84639"/>
<dbReference type="Ensembl" id="ENST00000341010.6">
    <molecule id="Q8WWZ1-1"/>
    <property type="protein sequence ID" value="ENSP00000341794.2"/>
    <property type="gene ID" value="ENSG00000136697.13"/>
</dbReference>
<dbReference type="Ensembl" id="ENST00000393197.3">
    <molecule id="Q8WWZ1-1"/>
    <property type="protein sequence ID" value="ENSP00000376893.2"/>
    <property type="gene ID" value="ENSG00000136697.13"/>
</dbReference>
<dbReference type="GeneID" id="84639"/>
<dbReference type="KEGG" id="hsa:84639"/>
<dbReference type="MANE-Select" id="ENST00000341010.6">
    <property type="protein sequence ID" value="ENSP00000341794.2"/>
    <property type="RefSeq nucleotide sequence ID" value="NM_173161.3"/>
    <property type="RefSeq protein sequence ID" value="NP_775184.1"/>
</dbReference>
<dbReference type="UCSC" id="uc002tiu.4">
    <molecule id="Q8WWZ1-1"/>
    <property type="organism name" value="human"/>
</dbReference>
<dbReference type="AGR" id="HGNC:15552"/>
<dbReference type="CTD" id="84639"/>
<dbReference type="DisGeNET" id="84639"/>
<dbReference type="GeneCards" id="IL1F10"/>
<dbReference type="HGNC" id="HGNC:15552">
    <property type="gene designation" value="IL1F10"/>
</dbReference>
<dbReference type="HPA" id="ENSG00000136697">
    <property type="expression patterns" value="Tissue enriched (skin)"/>
</dbReference>
<dbReference type="MIM" id="615296">
    <property type="type" value="gene"/>
</dbReference>
<dbReference type="neXtProt" id="NX_Q8WWZ1"/>
<dbReference type="OpenTargets" id="ENSG00000136697"/>
<dbReference type="PharmGKB" id="PA38387"/>
<dbReference type="VEuPathDB" id="HostDB:ENSG00000136697"/>
<dbReference type="eggNOG" id="ENOG502SN3A">
    <property type="taxonomic scope" value="Eukaryota"/>
</dbReference>
<dbReference type="GeneTree" id="ENSGT00950000182943"/>
<dbReference type="HOGENOM" id="CLU_095373_2_0_1"/>
<dbReference type="InParanoid" id="Q8WWZ1"/>
<dbReference type="OMA" id="QFYFEQS"/>
<dbReference type="OrthoDB" id="9435517at2759"/>
<dbReference type="PAN-GO" id="Q8WWZ1">
    <property type="GO annotations" value="6 GO annotations based on evolutionary models"/>
</dbReference>
<dbReference type="PhylomeDB" id="Q8WWZ1"/>
<dbReference type="TreeFam" id="TF300203"/>
<dbReference type="PathwayCommons" id="Q8WWZ1"/>
<dbReference type="Reactome" id="R-HSA-9007892">
    <property type="pathway name" value="Interleukin-38 signaling"/>
</dbReference>
<dbReference type="Reactome" id="R-HSA-9014826">
    <property type="pathway name" value="Interleukin-36 pathway"/>
</dbReference>
<dbReference type="SignaLink" id="Q8WWZ1"/>
<dbReference type="BioGRID-ORCS" id="84639">
    <property type="hits" value="12 hits in 1132 CRISPR screens"/>
</dbReference>
<dbReference type="EvolutionaryTrace" id="Q8WWZ1"/>
<dbReference type="GeneWiki" id="IL1F10"/>
<dbReference type="GenomeRNAi" id="84639"/>
<dbReference type="Pharos" id="Q8WWZ1">
    <property type="development level" value="Tbio"/>
</dbReference>
<dbReference type="PRO" id="PR:Q8WWZ1"/>
<dbReference type="Proteomes" id="UP000005640">
    <property type="component" value="Chromosome 2"/>
</dbReference>
<dbReference type="RNAct" id="Q8WWZ1">
    <property type="molecule type" value="protein"/>
</dbReference>
<dbReference type="Bgee" id="ENSG00000136697">
    <property type="expression patterns" value="Expressed in skin of limb and 38 other cell types or tissues"/>
</dbReference>
<dbReference type="GO" id="GO:0005737">
    <property type="term" value="C:cytoplasm"/>
    <property type="evidence" value="ECO:0007669"/>
    <property type="project" value="UniProtKB-SubCell"/>
</dbReference>
<dbReference type="GO" id="GO:0005576">
    <property type="term" value="C:extracellular region"/>
    <property type="evidence" value="ECO:0000304"/>
    <property type="project" value="Reactome"/>
</dbReference>
<dbReference type="GO" id="GO:0005615">
    <property type="term" value="C:extracellular space"/>
    <property type="evidence" value="ECO:0000318"/>
    <property type="project" value="GO_Central"/>
</dbReference>
<dbReference type="GO" id="GO:0005125">
    <property type="term" value="F:cytokine activity"/>
    <property type="evidence" value="ECO:0000318"/>
    <property type="project" value="GO_Central"/>
</dbReference>
<dbReference type="GO" id="GO:0005149">
    <property type="term" value="F:interleukin-1 receptor binding"/>
    <property type="evidence" value="ECO:0007669"/>
    <property type="project" value="InterPro"/>
</dbReference>
<dbReference type="GO" id="GO:0071222">
    <property type="term" value="P:cellular response to lipopolysaccharide"/>
    <property type="evidence" value="ECO:0000318"/>
    <property type="project" value="GO_Central"/>
</dbReference>
<dbReference type="GO" id="GO:0019221">
    <property type="term" value="P:cytokine-mediated signaling pathway"/>
    <property type="evidence" value="ECO:0000318"/>
    <property type="project" value="GO_Central"/>
</dbReference>
<dbReference type="GO" id="GO:0006955">
    <property type="term" value="P:immune response"/>
    <property type="evidence" value="ECO:0000318"/>
    <property type="project" value="GO_Central"/>
</dbReference>
<dbReference type="GO" id="GO:0006954">
    <property type="term" value="P:inflammatory response"/>
    <property type="evidence" value="ECO:0000318"/>
    <property type="project" value="GO_Central"/>
</dbReference>
<dbReference type="CDD" id="cd23302">
    <property type="entry name" value="beta-trefoil_IL38"/>
    <property type="match status" value="1"/>
</dbReference>
<dbReference type="FunFam" id="2.80.10.50:FF:000013">
    <property type="entry name" value="Interleukin-1"/>
    <property type="match status" value="1"/>
</dbReference>
<dbReference type="Gene3D" id="2.80.10.50">
    <property type="match status" value="1"/>
</dbReference>
<dbReference type="InterPro" id="IPR000975">
    <property type="entry name" value="IL-1_fam"/>
</dbReference>
<dbReference type="InterPro" id="IPR003297">
    <property type="entry name" value="IL-1RA/IL-36"/>
</dbReference>
<dbReference type="InterPro" id="IPR008996">
    <property type="entry name" value="IL1/FGF"/>
</dbReference>
<dbReference type="PANTHER" id="PTHR10078">
    <property type="entry name" value="INTERLEUKIN-1 FAMILY MEMBER"/>
    <property type="match status" value="1"/>
</dbReference>
<dbReference type="PANTHER" id="PTHR10078:SF29">
    <property type="entry name" value="INTERLEUKIN-1 FAMILY MEMBER 10"/>
    <property type="match status" value="1"/>
</dbReference>
<dbReference type="Pfam" id="PF00340">
    <property type="entry name" value="IL1"/>
    <property type="match status" value="1"/>
</dbReference>
<dbReference type="PRINTS" id="PR00264">
    <property type="entry name" value="INTERLEUKIN1"/>
</dbReference>
<dbReference type="PRINTS" id="PR01360">
    <property type="entry name" value="INTRLEUKIN1X"/>
</dbReference>
<dbReference type="SMART" id="SM00125">
    <property type="entry name" value="IL1"/>
    <property type="match status" value="1"/>
</dbReference>
<dbReference type="SUPFAM" id="SSF50353">
    <property type="entry name" value="Cytokine"/>
    <property type="match status" value="1"/>
</dbReference>
<gene>
    <name evidence="9" type="primary">IL1F10</name>
    <name type="synonym">FIL1T</name>
    <name type="synonym">IL1HY2</name>
    <name type="synonym">IL38</name>
    <name type="ORF">FKSG75</name>
    <name type="ORF">UNQ6119/PRO20041</name>
</gene>
<comment type="function">
    <text evidence="4">Cytokine with immunomodulatory activity. Alone, does not induce cytokine production, but reduces IL22 and IL17A production by T-cells in response to heat-killed Candida albicans. Reduces IL36G-induced production of IL8 by peripheral blood mononuclear cells. Increases IL6 production by dendritic cells stimulated by bacterial lipopolysaccharides (LPS). Ligand for IL-36R/IL1RL2.</text>
</comment>
<comment type="subunit">
    <text evidence="5">Interacts with cargo receptor TMED10; the interaction mediates the translocation from the cytoplasm into the ERGIC (endoplasmic reticulum-Golgi intermediate compartment) and thereby secretion.</text>
</comment>
<comment type="interaction">
    <interactant intactId="EBI-13318821">
        <id>Q8WWZ1</id>
    </interactant>
    <interactant intactId="EBI-353389">
        <id>P12268</id>
        <label>IMPDH2</label>
    </interactant>
    <organismsDiffer>false</organismsDiffer>
    <experiments>3</experiments>
</comment>
<comment type="subcellular location">
    <subcellularLocation>
        <location evidence="5">Cytoplasm</location>
    </subcellularLocation>
    <subcellularLocation>
        <location evidence="5">Secreted</location>
    </subcellularLocation>
    <text evidence="5">The secretion is dependent on protein unfolding and facilitated by the cargo receptor TMED10; it results in protein translocation from the cytoplasm into the ERGIC (endoplasmic reticulum-Golgi intermediate compartment) followed by vesicle entry and secretion.</text>
</comment>
<comment type="alternative products">
    <event type="alternative splicing"/>
    <isoform>
        <id>Q8WWZ1-1</id>
        <name>1</name>
        <sequence type="displayed"/>
    </isoform>
    <isoform>
        <id>Q8WWZ1-2</id>
        <name>2</name>
        <sequence type="described" ref="VSP_002658"/>
    </isoform>
</comment>
<comment type="tissue specificity">
    <text>Expressed in fetal skin, spleen and tonsil. Expressed mostly in the basal epithelia of skin and in proliferating B-cells of the tonsil.</text>
</comment>
<comment type="similarity">
    <text evidence="8">Belongs to the IL-1 family.</text>
</comment>
<comment type="online information" name="Wikipedia">
    <link uri="https://en.wikipedia.org/wiki/Interleukin_1"/>
    <text>Interleukin-1 entry</text>
</comment>